<feature type="chain" id="PRO_1000139966" description="L-fucose isomerase">
    <location>
        <begin position="1"/>
        <end position="588"/>
    </location>
</feature>
<feature type="active site" description="Proton acceptor" evidence="1">
    <location>
        <position position="335"/>
    </location>
</feature>
<feature type="active site" description="Proton acceptor" evidence="1">
    <location>
        <position position="359"/>
    </location>
</feature>
<feature type="binding site" evidence="1">
    <location>
        <position position="335"/>
    </location>
    <ligand>
        <name>Mn(2+)</name>
        <dbReference type="ChEBI" id="CHEBI:29035"/>
    </ligand>
</feature>
<feature type="binding site" evidence="1">
    <location>
        <position position="359"/>
    </location>
    <ligand>
        <name>Mn(2+)</name>
        <dbReference type="ChEBI" id="CHEBI:29035"/>
    </ligand>
</feature>
<feature type="binding site" evidence="1">
    <location>
        <position position="525"/>
    </location>
    <ligand>
        <name>Mn(2+)</name>
        <dbReference type="ChEBI" id="CHEBI:29035"/>
    </ligand>
</feature>
<evidence type="ECO:0000255" key="1">
    <source>
        <dbReference type="HAMAP-Rule" id="MF_01254"/>
    </source>
</evidence>
<dbReference type="EC" id="5.3.1.25" evidence="1"/>
<dbReference type="EMBL" id="CP001033">
    <property type="protein sequence ID" value="ACB91378.1"/>
    <property type="molecule type" value="Genomic_DNA"/>
</dbReference>
<dbReference type="RefSeq" id="WP_000614250.1">
    <property type="nucleotide sequence ID" value="NC_010582.1"/>
</dbReference>
<dbReference type="SMR" id="B2INH7"/>
<dbReference type="KEGG" id="spw:SPCG_2126"/>
<dbReference type="HOGENOM" id="CLU_033326_1_0_9"/>
<dbReference type="UniPathway" id="UPA00563">
    <property type="reaction ID" value="UER00624"/>
</dbReference>
<dbReference type="GO" id="GO:0005737">
    <property type="term" value="C:cytoplasm"/>
    <property type="evidence" value="ECO:0007669"/>
    <property type="project" value="UniProtKB-SubCell"/>
</dbReference>
<dbReference type="GO" id="GO:0008790">
    <property type="term" value="F:arabinose isomerase activity"/>
    <property type="evidence" value="ECO:0007669"/>
    <property type="project" value="TreeGrafter"/>
</dbReference>
<dbReference type="GO" id="GO:0008736">
    <property type="term" value="F:L-fucose isomerase activity"/>
    <property type="evidence" value="ECO:0007669"/>
    <property type="project" value="UniProtKB-UniRule"/>
</dbReference>
<dbReference type="GO" id="GO:0030145">
    <property type="term" value="F:manganese ion binding"/>
    <property type="evidence" value="ECO:0007669"/>
    <property type="project" value="UniProtKB-UniRule"/>
</dbReference>
<dbReference type="GO" id="GO:0019571">
    <property type="term" value="P:D-arabinose catabolic process"/>
    <property type="evidence" value="ECO:0007669"/>
    <property type="project" value="TreeGrafter"/>
</dbReference>
<dbReference type="GO" id="GO:0042355">
    <property type="term" value="P:L-fucose catabolic process"/>
    <property type="evidence" value="ECO:0007669"/>
    <property type="project" value="UniProtKB-UniRule"/>
</dbReference>
<dbReference type="CDD" id="cd03556">
    <property type="entry name" value="L-fucose_isomerase"/>
    <property type="match status" value="1"/>
</dbReference>
<dbReference type="FunFam" id="3.20.14.10:FF:000001">
    <property type="entry name" value="L-fucose isomerase"/>
    <property type="match status" value="1"/>
</dbReference>
<dbReference type="FunFam" id="3.40.50.1070:FF:000001">
    <property type="entry name" value="L-fucose isomerase"/>
    <property type="match status" value="1"/>
</dbReference>
<dbReference type="Gene3D" id="3.40.50.1070">
    <property type="match status" value="1"/>
</dbReference>
<dbReference type="Gene3D" id="3.40.275.10">
    <property type="entry name" value="L-fucose Isomerase, Chain A, domain 2"/>
    <property type="match status" value="1"/>
</dbReference>
<dbReference type="Gene3D" id="3.20.14.10">
    <property type="entry name" value="L-fucose/L-arabinose isomerase, C-terminal"/>
    <property type="match status" value="1"/>
</dbReference>
<dbReference type="HAMAP" id="MF_01254">
    <property type="entry name" value="Fucose_iso"/>
    <property type="match status" value="1"/>
</dbReference>
<dbReference type="InterPro" id="IPR004216">
    <property type="entry name" value="Fuc/Ara_isomerase_C"/>
</dbReference>
<dbReference type="InterPro" id="IPR038393">
    <property type="entry name" value="Fuc_iso_dom3_sf"/>
</dbReference>
<dbReference type="InterPro" id="IPR015888">
    <property type="entry name" value="Fuc_isomerase_C"/>
</dbReference>
<dbReference type="InterPro" id="IPR038391">
    <property type="entry name" value="Fucose_iso_dom1_sf"/>
</dbReference>
<dbReference type="InterPro" id="IPR012888">
    <property type="entry name" value="Fucose_iso_N1"/>
</dbReference>
<dbReference type="InterPro" id="IPR005763">
    <property type="entry name" value="Fucose_isomerase"/>
</dbReference>
<dbReference type="InterPro" id="IPR038392">
    <property type="entry name" value="Fucose_isomerase_dom2_sf"/>
</dbReference>
<dbReference type="InterPro" id="IPR009015">
    <property type="entry name" value="Fucose_isomerase_N/cen_sf"/>
</dbReference>
<dbReference type="InterPro" id="IPR012889">
    <property type="entry name" value="Fucose_isomerase_N2"/>
</dbReference>
<dbReference type="NCBIfam" id="TIGR01089">
    <property type="entry name" value="fucI"/>
    <property type="match status" value="1"/>
</dbReference>
<dbReference type="NCBIfam" id="NF008220">
    <property type="entry name" value="PRK10991.1"/>
    <property type="match status" value="1"/>
</dbReference>
<dbReference type="PANTHER" id="PTHR37840">
    <property type="entry name" value="L-FUCOSE ISOMERASE"/>
    <property type="match status" value="1"/>
</dbReference>
<dbReference type="PANTHER" id="PTHR37840:SF1">
    <property type="entry name" value="L-FUCOSE ISOMERASE"/>
    <property type="match status" value="1"/>
</dbReference>
<dbReference type="Pfam" id="PF02952">
    <property type="entry name" value="Fucose_iso_C"/>
    <property type="match status" value="1"/>
</dbReference>
<dbReference type="Pfam" id="PF07881">
    <property type="entry name" value="Fucose_iso_N1"/>
    <property type="match status" value="1"/>
</dbReference>
<dbReference type="Pfam" id="PF07882">
    <property type="entry name" value="Fucose_iso_N2"/>
    <property type="match status" value="1"/>
</dbReference>
<dbReference type="SUPFAM" id="SSF50443">
    <property type="entry name" value="FucI/AraA C-terminal domain-like"/>
    <property type="match status" value="1"/>
</dbReference>
<dbReference type="SUPFAM" id="SSF53743">
    <property type="entry name" value="FucI/AraA N-terminal and middle domains"/>
    <property type="match status" value="1"/>
</dbReference>
<protein>
    <recommendedName>
        <fullName evidence="1">L-fucose isomerase</fullName>
        <ecNumber evidence="1">5.3.1.25</ecNumber>
    </recommendedName>
    <alternativeName>
        <fullName evidence="1">6-deoxy-L-galactose isomerase</fullName>
    </alternativeName>
    <alternativeName>
        <fullName>FucIase</fullName>
    </alternativeName>
</protein>
<accession>B2INH7</accession>
<gene>
    <name evidence="1" type="primary">fucI</name>
    <name type="ordered locus">SPCG_2126</name>
</gene>
<comment type="function">
    <text evidence="1">Converts the aldose L-fucose into the corresponding ketose L-fuculose.</text>
</comment>
<comment type="catalytic activity">
    <reaction evidence="1">
        <text>L-fucose = L-fuculose</text>
        <dbReference type="Rhea" id="RHEA:17233"/>
        <dbReference type="ChEBI" id="CHEBI:2181"/>
        <dbReference type="ChEBI" id="CHEBI:17617"/>
        <dbReference type="EC" id="5.3.1.25"/>
    </reaction>
</comment>
<comment type="cofactor">
    <cofactor evidence="1">
        <name>Mn(2+)</name>
        <dbReference type="ChEBI" id="CHEBI:29035"/>
    </cofactor>
</comment>
<comment type="pathway">
    <text evidence="1">Carbohydrate degradation; L-fucose degradation; L-lactaldehyde and glycerone phosphate from L-fucose: step 1/3.</text>
</comment>
<comment type="subcellular location">
    <subcellularLocation>
        <location evidence="1">Cytoplasm</location>
    </subcellularLocation>
</comment>
<comment type="similarity">
    <text evidence="1">Belongs to the L-fucose isomerase family.</text>
</comment>
<reference key="1">
    <citation type="journal article" date="2009" name="BMC Genomics">
        <title>Genome evolution driven by host adaptations results in a more virulent and antimicrobial-resistant Streptococcus pneumoniae serotype 14.</title>
        <authorList>
            <person name="Ding F."/>
            <person name="Tang P."/>
            <person name="Hsu M.-H."/>
            <person name="Cui P."/>
            <person name="Hu S."/>
            <person name="Yu J."/>
            <person name="Chiu C.-H."/>
        </authorList>
    </citation>
    <scope>NUCLEOTIDE SEQUENCE [LARGE SCALE GENOMIC DNA]</scope>
    <source>
        <strain>CGSP14</strain>
    </source>
</reference>
<sequence length="588" mass="65890">MIQHPRIGIRPTIDGRRQGVRESLEVQTMNMAKSVADLISSTLKYPDGEPVECVISPSTIGRVPEAAASHELFKKSNVCATITVTPCWCYGSETMDMSPDIPHAIWGFNGTERPGAVYLAAVLASHAQKGIPAFGIYGRDVQEANDTDIPEDVKEKLLRYARAALATGLMRDTAYLSMGSVSMGIGGSIVNPDFFQEYLGMRNESVDMTEFTRRMDRGIYDPEEFERAMVWVKEHIKEGVDRNREDLILSKEEKEKQWEFVIKMFMIGRDLMVGNPRLAELGFEEEAVGHHALVAGFQGQRQWTDHFPNGDFMETFLNTQFDWNGIRKPFVFATENDSLNGVSMLFNYLLTNTPQIFADVRTYWSPEAVERVTGYTLEGRAAAGFLHLINSGSCTLDGTGQATRDGKPVMKPFWELDESEVQAMLENTDFPPANREYFRGGGFSTRFLTKGDMPVTMVRLNLLKGVGPVLQIAEGYTLELPEDVHHTLDNRTDPGWPTTWFAPRLTGKGAFKSVYDVMNNWGANHGAITYGHIGADLITLASMLRIPVNMHNVPEEDIFRPKNWSLFGTEDLESADYRACQLLGPLHK</sequence>
<name>FUCI_STRPS</name>
<keyword id="KW-0119">Carbohydrate metabolism</keyword>
<keyword id="KW-0963">Cytoplasm</keyword>
<keyword id="KW-0294">Fucose metabolism</keyword>
<keyword id="KW-0413">Isomerase</keyword>
<keyword id="KW-0464">Manganese</keyword>
<keyword id="KW-0479">Metal-binding</keyword>
<organism>
    <name type="scientific">Streptococcus pneumoniae (strain CGSP14)</name>
    <dbReference type="NCBI Taxonomy" id="516950"/>
    <lineage>
        <taxon>Bacteria</taxon>
        <taxon>Bacillati</taxon>
        <taxon>Bacillota</taxon>
        <taxon>Bacilli</taxon>
        <taxon>Lactobacillales</taxon>
        <taxon>Streptococcaceae</taxon>
        <taxon>Streptococcus</taxon>
    </lineage>
</organism>
<proteinExistence type="inferred from homology"/>